<keyword id="KW-0067">ATP-binding</keyword>
<keyword id="KW-0436">Ligase</keyword>
<keyword id="KW-0547">Nucleotide-binding</keyword>
<keyword id="KW-0648">Protein biosynthesis</keyword>
<keyword id="KW-1185">Reference proteome</keyword>
<gene>
    <name evidence="1" type="primary">gatA</name>
    <name type="ordered locus">ABO_0528</name>
</gene>
<dbReference type="EC" id="6.3.5.7" evidence="1"/>
<dbReference type="EMBL" id="AM286690">
    <property type="protein sequence ID" value="CAL15976.1"/>
    <property type="molecule type" value="Genomic_DNA"/>
</dbReference>
<dbReference type="RefSeq" id="WP_011587814.1">
    <property type="nucleotide sequence ID" value="NC_008260.1"/>
</dbReference>
<dbReference type="SMR" id="Q0VS72"/>
<dbReference type="STRING" id="393595.ABO_0528"/>
<dbReference type="KEGG" id="abo:ABO_0528"/>
<dbReference type="eggNOG" id="COG0154">
    <property type="taxonomic scope" value="Bacteria"/>
</dbReference>
<dbReference type="HOGENOM" id="CLU_009600_0_3_6"/>
<dbReference type="OrthoDB" id="8872210at2"/>
<dbReference type="Proteomes" id="UP000008871">
    <property type="component" value="Chromosome"/>
</dbReference>
<dbReference type="GO" id="GO:0030956">
    <property type="term" value="C:glutamyl-tRNA(Gln) amidotransferase complex"/>
    <property type="evidence" value="ECO:0007669"/>
    <property type="project" value="InterPro"/>
</dbReference>
<dbReference type="GO" id="GO:0005524">
    <property type="term" value="F:ATP binding"/>
    <property type="evidence" value="ECO:0007669"/>
    <property type="project" value="UniProtKB-KW"/>
</dbReference>
<dbReference type="GO" id="GO:0050567">
    <property type="term" value="F:glutaminyl-tRNA synthase (glutamine-hydrolyzing) activity"/>
    <property type="evidence" value="ECO:0007669"/>
    <property type="project" value="UniProtKB-UniRule"/>
</dbReference>
<dbReference type="GO" id="GO:0006412">
    <property type="term" value="P:translation"/>
    <property type="evidence" value="ECO:0007669"/>
    <property type="project" value="UniProtKB-UniRule"/>
</dbReference>
<dbReference type="Gene3D" id="3.90.1300.10">
    <property type="entry name" value="Amidase signature (AS) domain"/>
    <property type="match status" value="1"/>
</dbReference>
<dbReference type="HAMAP" id="MF_00120">
    <property type="entry name" value="GatA"/>
    <property type="match status" value="1"/>
</dbReference>
<dbReference type="InterPro" id="IPR000120">
    <property type="entry name" value="Amidase"/>
</dbReference>
<dbReference type="InterPro" id="IPR020556">
    <property type="entry name" value="Amidase_CS"/>
</dbReference>
<dbReference type="InterPro" id="IPR023631">
    <property type="entry name" value="Amidase_dom"/>
</dbReference>
<dbReference type="InterPro" id="IPR036928">
    <property type="entry name" value="AS_sf"/>
</dbReference>
<dbReference type="InterPro" id="IPR004412">
    <property type="entry name" value="GatA"/>
</dbReference>
<dbReference type="NCBIfam" id="TIGR00132">
    <property type="entry name" value="gatA"/>
    <property type="match status" value="1"/>
</dbReference>
<dbReference type="PANTHER" id="PTHR11895:SF151">
    <property type="entry name" value="GLUTAMYL-TRNA(GLN) AMIDOTRANSFERASE SUBUNIT A"/>
    <property type="match status" value="1"/>
</dbReference>
<dbReference type="PANTHER" id="PTHR11895">
    <property type="entry name" value="TRANSAMIDASE"/>
    <property type="match status" value="1"/>
</dbReference>
<dbReference type="Pfam" id="PF01425">
    <property type="entry name" value="Amidase"/>
    <property type="match status" value="1"/>
</dbReference>
<dbReference type="SUPFAM" id="SSF75304">
    <property type="entry name" value="Amidase signature (AS) enzymes"/>
    <property type="match status" value="1"/>
</dbReference>
<dbReference type="PROSITE" id="PS00571">
    <property type="entry name" value="AMIDASES"/>
    <property type="match status" value="1"/>
</dbReference>
<name>GATA_ALCBS</name>
<comment type="function">
    <text evidence="1">Allows the formation of correctly charged Gln-tRNA(Gln) through the transamidation of misacylated Glu-tRNA(Gln) in organisms which lack glutaminyl-tRNA synthetase. The reaction takes place in the presence of glutamine and ATP through an activated gamma-phospho-Glu-tRNA(Gln).</text>
</comment>
<comment type="catalytic activity">
    <reaction evidence="1">
        <text>L-glutamyl-tRNA(Gln) + L-glutamine + ATP + H2O = L-glutaminyl-tRNA(Gln) + L-glutamate + ADP + phosphate + H(+)</text>
        <dbReference type="Rhea" id="RHEA:17521"/>
        <dbReference type="Rhea" id="RHEA-COMP:9681"/>
        <dbReference type="Rhea" id="RHEA-COMP:9684"/>
        <dbReference type="ChEBI" id="CHEBI:15377"/>
        <dbReference type="ChEBI" id="CHEBI:15378"/>
        <dbReference type="ChEBI" id="CHEBI:29985"/>
        <dbReference type="ChEBI" id="CHEBI:30616"/>
        <dbReference type="ChEBI" id="CHEBI:43474"/>
        <dbReference type="ChEBI" id="CHEBI:58359"/>
        <dbReference type="ChEBI" id="CHEBI:78520"/>
        <dbReference type="ChEBI" id="CHEBI:78521"/>
        <dbReference type="ChEBI" id="CHEBI:456216"/>
        <dbReference type="EC" id="6.3.5.7"/>
    </reaction>
</comment>
<comment type="subunit">
    <text evidence="1">Heterotrimer of A, B and C subunits.</text>
</comment>
<comment type="similarity">
    <text evidence="1">Belongs to the amidase family. GatA subfamily.</text>
</comment>
<sequence>MHTKTLTELKAGLAAGDFSSRELTEHFLARIKQYDGELNSFVTVTEEQALAQADAADATLATNRASSSVSGLLTGLPIAHKDIFCTEGVRTSCGSKMLDNFIAPYTATVVEKMAAEGAVMLGKTNMDEFAMGSSNETSYYGPVKNPWDLERVPGGSSGGAAACLGARLAPAATGTDTGGSIRQPAALNNITGLKPTYGRVSRWGMIAFASSLDQAGPMAQSAEDCALMLQAMAGHDHRDSTSLNEKVGDYLGALKDDIRGLTIGIPEEFFPDTLDGAIADNSRDAIRELEKLGAKVVSVSLPSIKLSVPAYYVIAPAEASANLSRFDGVRFGHRCDDPQDLEDLYKRSRSEGFGDEVKRRILVGAYALSAGYYDAYYRRAQQVRSLIRDDFARAFEKVDVLMGPTAPETAFKLGAKKDDPVSMYMADVFTIGVNLAGLPALSMPTGFINGLPTGTQIIGNYFREGQILNVAHKYQQATDWHKQAPAFGGAQ</sequence>
<proteinExistence type="inferred from homology"/>
<organism>
    <name type="scientific">Alcanivorax borkumensis (strain ATCC 700651 / DSM 11573 / NCIMB 13689 / SK2)</name>
    <dbReference type="NCBI Taxonomy" id="393595"/>
    <lineage>
        <taxon>Bacteria</taxon>
        <taxon>Pseudomonadati</taxon>
        <taxon>Pseudomonadota</taxon>
        <taxon>Gammaproteobacteria</taxon>
        <taxon>Oceanospirillales</taxon>
        <taxon>Alcanivoracaceae</taxon>
        <taxon>Alcanivorax</taxon>
    </lineage>
</organism>
<accession>Q0VS72</accession>
<evidence type="ECO:0000255" key="1">
    <source>
        <dbReference type="HAMAP-Rule" id="MF_00120"/>
    </source>
</evidence>
<protein>
    <recommendedName>
        <fullName evidence="1">Glutamyl-tRNA(Gln) amidotransferase subunit A</fullName>
        <shortName evidence="1">Glu-ADT subunit A</shortName>
        <ecNumber evidence="1">6.3.5.7</ecNumber>
    </recommendedName>
</protein>
<feature type="chain" id="PRO_1000015795" description="Glutamyl-tRNA(Gln) amidotransferase subunit A">
    <location>
        <begin position="1"/>
        <end position="491"/>
    </location>
</feature>
<feature type="active site" description="Charge relay system" evidence="1">
    <location>
        <position position="81"/>
    </location>
</feature>
<feature type="active site" description="Charge relay system" evidence="1">
    <location>
        <position position="156"/>
    </location>
</feature>
<feature type="active site" description="Acyl-ester intermediate" evidence="1">
    <location>
        <position position="180"/>
    </location>
</feature>
<reference key="1">
    <citation type="journal article" date="2006" name="Nat. Biotechnol.">
        <title>Genome sequence of the ubiquitous hydrocarbon-degrading marine bacterium Alcanivorax borkumensis.</title>
        <authorList>
            <person name="Schneiker S."/>
            <person name="Martins dos Santos V.A.P."/>
            <person name="Bartels D."/>
            <person name="Bekel T."/>
            <person name="Brecht M."/>
            <person name="Buhrmester J."/>
            <person name="Chernikova T.N."/>
            <person name="Denaro R."/>
            <person name="Ferrer M."/>
            <person name="Gertler C."/>
            <person name="Goesmann A."/>
            <person name="Golyshina O.V."/>
            <person name="Kaminski F."/>
            <person name="Khachane A.N."/>
            <person name="Lang S."/>
            <person name="Linke B."/>
            <person name="McHardy A.C."/>
            <person name="Meyer F."/>
            <person name="Nechitaylo T."/>
            <person name="Puehler A."/>
            <person name="Regenhardt D."/>
            <person name="Rupp O."/>
            <person name="Sabirova J.S."/>
            <person name="Selbitschka W."/>
            <person name="Yakimov M.M."/>
            <person name="Timmis K.N."/>
            <person name="Vorhoelter F.-J."/>
            <person name="Weidner S."/>
            <person name="Kaiser O."/>
            <person name="Golyshin P.N."/>
        </authorList>
    </citation>
    <scope>NUCLEOTIDE SEQUENCE [LARGE SCALE GENOMIC DNA]</scope>
    <source>
        <strain>ATCC 700651 / DSM 11573 / NCIMB 13689 / SK2</strain>
    </source>
</reference>